<comment type="function">
    <text>The alpha subunit is responsible for the aldol cleavage of indoleglycerol phosphate to indole and glyceraldehyde 3-phosphate.</text>
</comment>
<comment type="catalytic activity">
    <reaction evidence="1">
        <text>(1S,2R)-1-C-(indol-3-yl)glycerol 3-phosphate + L-serine = D-glyceraldehyde 3-phosphate + L-tryptophan + H2O</text>
        <dbReference type="Rhea" id="RHEA:10532"/>
        <dbReference type="ChEBI" id="CHEBI:15377"/>
        <dbReference type="ChEBI" id="CHEBI:33384"/>
        <dbReference type="ChEBI" id="CHEBI:57912"/>
        <dbReference type="ChEBI" id="CHEBI:58866"/>
        <dbReference type="ChEBI" id="CHEBI:59776"/>
        <dbReference type="EC" id="4.2.1.20"/>
    </reaction>
</comment>
<comment type="pathway">
    <text evidence="1">Amino-acid biosynthesis; L-tryptophan biosynthesis; L-tryptophan from chorismate: step 5/5.</text>
</comment>
<comment type="subunit">
    <text evidence="1">Tetramer of two alpha and two beta chains.</text>
</comment>
<comment type="similarity">
    <text evidence="1">Belongs to the TrpA family.</text>
</comment>
<proteinExistence type="inferred from homology"/>
<dbReference type="EC" id="4.2.1.20" evidence="1"/>
<dbReference type="EMBL" id="M35130">
    <property type="protein sequence ID" value="AAA72855.1"/>
    <property type="molecule type" value="Genomic_DNA"/>
</dbReference>
<dbReference type="SMR" id="P14637"/>
<dbReference type="UniPathway" id="UPA00035">
    <property type="reaction ID" value="UER00044"/>
</dbReference>
<dbReference type="GO" id="GO:0005829">
    <property type="term" value="C:cytosol"/>
    <property type="evidence" value="ECO:0007669"/>
    <property type="project" value="TreeGrafter"/>
</dbReference>
<dbReference type="GO" id="GO:0004834">
    <property type="term" value="F:tryptophan synthase activity"/>
    <property type="evidence" value="ECO:0007669"/>
    <property type="project" value="UniProtKB-UniRule"/>
</dbReference>
<dbReference type="CDD" id="cd04724">
    <property type="entry name" value="Tryptophan_synthase_alpha"/>
    <property type="match status" value="1"/>
</dbReference>
<dbReference type="FunFam" id="3.20.20.70:FF:000037">
    <property type="entry name" value="Tryptophan synthase alpha chain"/>
    <property type="match status" value="1"/>
</dbReference>
<dbReference type="Gene3D" id="3.20.20.70">
    <property type="entry name" value="Aldolase class I"/>
    <property type="match status" value="1"/>
</dbReference>
<dbReference type="HAMAP" id="MF_00131">
    <property type="entry name" value="Trp_synth_alpha"/>
    <property type="match status" value="1"/>
</dbReference>
<dbReference type="InterPro" id="IPR013785">
    <property type="entry name" value="Aldolase_TIM"/>
</dbReference>
<dbReference type="InterPro" id="IPR011060">
    <property type="entry name" value="RibuloseP-bd_barrel"/>
</dbReference>
<dbReference type="InterPro" id="IPR018204">
    <property type="entry name" value="Trp_synthase_alpha_AS"/>
</dbReference>
<dbReference type="InterPro" id="IPR002028">
    <property type="entry name" value="Trp_synthase_suA"/>
</dbReference>
<dbReference type="NCBIfam" id="TIGR00262">
    <property type="entry name" value="trpA"/>
    <property type="match status" value="1"/>
</dbReference>
<dbReference type="PANTHER" id="PTHR43406:SF1">
    <property type="entry name" value="TRYPTOPHAN SYNTHASE ALPHA CHAIN, CHLOROPLASTIC"/>
    <property type="match status" value="1"/>
</dbReference>
<dbReference type="PANTHER" id="PTHR43406">
    <property type="entry name" value="TRYPTOPHAN SYNTHASE, ALPHA CHAIN"/>
    <property type="match status" value="1"/>
</dbReference>
<dbReference type="Pfam" id="PF00290">
    <property type="entry name" value="Trp_syntA"/>
    <property type="match status" value="1"/>
</dbReference>
<dbReference type="SUPFAM" id="SSF51366">
    <property type="entry name" value="Ribulose-phoshate binding barrel"/>
    <property type="match status" value="1"/>
</dbReference>
<dbReference type="PROSITE" id="PS00167">
    <property type="entry name" value="TRP_SYNTHASE_ALPHA"/>
    <property type="match status" value="1"/>
</dbReference>
<feature type="chain" id="PRO_0000098895" description="Tryptophan synthase alpha chain">
    <location>
        <begin position="1"/>
        <end position="284"/>
    </location>
</feature>
<feature type="active site" description="Proton acceptor" evidence="1">
    <location>
        <position position="55"/>
    </location>
</feature>
<feature type="active site" description="Proton acceptor" evidence="1">
    <location>
        <position position="66"/>
    </location>
</feature>
<gene>
    <name evidence="1" type="primary">trpA</name>
</gene>
<protein>
    <recommendedName>
        <fullName evidence="1">Tryptophan synthase alpha chain</fullName>
        <ecNumber evidence="1">4.2.1.20</ecNumber>
    </recommendedName>
</protein>
<name>TRPA_METVO</name>
<sequence>MKNLENLEKDLKNDLKKDLKKEKPILVSFLVSGDPNIEATLKFMNALDEYCGVIELGIPFSDPIADGSTIQEANVRSLSNGYKIHQSFDVLREFRKFSDTPVVLMTYYNPIYKRGIENFVIQAKEAGANGLIIVDLPLDEAEQYRAICKKHDMGTVFLVAPNTPDERLMYSDEASTLFLYVISTFGITGARGSFEKMTFEFIARAKNLCDKNKLYVGFGISNGEHAEKIIENGADGVIVGSAFVDIIKEYGDSNETIYKLKELARELSEGIHKGYVKYNEKNKY</sequence>
<accession>P14637</accession>
<reference key="1">
    <citation type="journal article" date="1988" name="Mol. Gen. Genet.">
        <title>Cloning of the trp genes from the archaebacterium Methanococcus voltae: nucleotide sequence of the trpBA genes.</title>
        <authorList>
            <person name="Sibold L."/>
            <person name="Henriquet M."/>
        </authorList>
    </citation>
    <scope>NUCLEOTIDE SEQUENCE [GENOMIC DNA]</scope>
    <source>
        <strain>ATCC 33273 / DSM 1537 / NBRC 100457 / OCM 70 / PS</strain>
    </source>
</reference>
<keyword id="KW-0028">Amino-acid biosynthesis</keyword>
<keyword id="KW-0057">Aromatic amino acid biosynthesis</keyword>
<keyword id="KW-0456">Lyase</keyword>
<keyword id="KW-0822">Tryptophan biosynthesis</keyword>
<organism>
    <name type="scientific">Methanococcus voltae</name>
    <dbReference type="NCBI Taxonomy" id="2188"/>
    <lineage>
        <taxon>Archaea</taxon>
        <taxon>Methanobacteriati</taxon>
        <taxon>Methanobacteriota</taxon>
        <taxon>Methanomada group</taxon>
        <taxon>Methanococci</taxon>
        <taxon>Methanococcales</taxon>
        <taxon>Methanococcaceae</taxon>
        <taxon>Methanococcus</taxon>
    </lineage>
</organism>
<evidence type="ECO:0000255" key="1">
    <source>
        <dbReference type="HAMAP-Rule" id="MF_00131"/>
    </source>
</evidence>